<dbReference type="EMBL" id="CP001078">
    <property type="protein sequence ID" value="ACD53675.1"/>
    <property type="molecule type" value="Genomic_DNA"/>
</dbReference>
<dbReference type="RefSeq" id="WP_012451530.1">
    <property type="nucleotide sequence ID" value="NC_010723.1"/>
</dbReference>
<dbReference type="SMR" id="B2UZI5"/>
<dbReference type="KEGG" id="cbt:CLH_0475"/>
<dbReference type="HOGENOM" id="CLU_036856_0_1_9"/>
<dbReference type="GO" id="GO:0005737">
    <property type="term" value="C:cytoplasm"/>
    <property type="evidence" value="ECO:0007669"/>
    <property type="project" value="UniProtKB-SubCell"/>
</dbReference>
<dbReference type="GO" id="GO:0016149">
    <property type="term" value="F:translation release factor activity, codon specific"/>
    <property type="evidence" value="ECO:0007669"/>
    <property type="project" value="UniProtKB-UniRule"/>
</dbReference>
<dbReference type="FunFam" id="3.30.160.20:FF:000004">
    <property type="entry name" value="Peptide chain release factor 1"/>
    <property type="match status" value="1"/>
</dbReference>
<dbReference type="FunFam" id="3.30.70.1660:FF:000002">
    <property type="entry name" value="Peptide chain release factor 1"/>
    <property type="match status" value="1"/>
</dbReference>
<dbReference type="FunFam" id="3.30.70.1660:FF:000004">
    <property type="entry name" value="Peptide chain release factor 1"/>
    <property type="match status" value="1"/>
</dbReference>
<dbReference type="Gene3D" id="3.30.160.20">
    <property type="match status" value="1"/>
</dbReference>
<dbReference type="Gene3D" id="3.30.70.1660">
    <property type="match status" value="1"/>
</dbReference>
<dbReference type="Gene3D" id="6.10.140.1950">
    <property type="match status" value="1"/>
</dbReference>
<dbReference type="HAMAP" id="MF_00093">
    <property type="entry name" value="Rel_fac_1"/>
    <property type="match status" value="1"/>
</dbReference>
<dbReference type="InterPro" id="IPR005139">
    <property type="entry name" value="PCRF"/>
</dbReference>
<dbReference type="InterPro" id="IPR000352">
    <property type="entry name" value="Pep_chain_release_fac_I"/>
</dbReference>
<dbReference type="InterPro" id="IPR045853">
    <property type="entry name" value="Pep_chain_release_fac_I_sf"/>
</dbReference>
<dbReference type="InterPro" id="IPR050057">
    <property type="entry name" value="Prokaryotic/Mito_RF"/>
</dbReference>
<dbReference type="InterPro" id="IPR004373">
    <property type="entry name" value="RF-1"/>
</dbReference>
<dbReference type="NCBIfam" id="TIGR00019">
    <property type="entry name" value="prfA"/>
    <property type="match status" value="1"/>
</dbReference>
<dbReference type="NCBIfam" id="NF001859">
    <property type="entry name" value="PRK00591.1"/>
    <property type="match status" value="1"/>
</dbReference>
<dbReference type="PANTHER" id="PTHR43804">
    <property type="entry name" value="LD18447P"/>
    <property type="match status" value="1"/>
</dbReference>
<dbReference type="PANTHER" id="PTHR43804:SF7">
    <property type="entry name" value="LD18447P"/>
    <property type="match status" value="1"/>
</dbReference>
<dbReference type="Pfam" id="PF03462">
    <property type="entry name" value="PCRF"/>
    <property type="match status" value="1"/>
</dbReference>
<dbReference type="Pfam" id="PF00472">
    <property type="entry name" value="RF-1"/>
    <property type="match status" value="1"/>
</dbReference>
<dbReference type="SMART" id="SM00937">
    <property type="entry name" value="PCRF"/>
    <property type="match status" value="1"/>
</dbReference>
<dbReference type="SUPFAM" id="SSF75620">
    <property type="entry name" value="Release factor"/>
    <property type="match status" value="1"/>
</dbReference>
<dbReference type="PROSITE" id="PS00745">
    <property type="entry name" value="RF_PROK_I"/>
    <property type="match status" value="1"/>
</dbReference>
<feature type="chain" id="PRO_1000093441" description="Peptide chain release factor 1">
    <location>
        <begin position="1"/>
        <end position="360"/>
    </location>
</feature>
<feature type="modified residue" description="N5-methylglutamine" evidence="1">
    <location>
        <position position="234"/>
    </location>
</feature>
<evidence type="ECO:0000255" key="1">
    <source>
        <dbReference type="HAMAP-Rule" id="MF_00093"/>
    </source>
</evidence>
<organism>
    <name type="scientific">Clostridium botulinum (strain Alaska E43 / Type E3)</name>
    <dbReference type="NCBI Taxonomy" id="508767"/>
    <lineage>
        <taxon>Bacteria</taxon>
        <taxon>Bacillati</taxon>
        <taxon>Bacillota</taxon>
        <taxon>Clostridia</taxon>
        <taxon>Eubacteriales</taxon>
        <taxon>Clostridiaceae</taxon>
        <taxon>Clostridium</taxon>
    </lineage>
</organism>
<protein>
    <recommendedName>
        <fullName evidence="1">Peptide chain release factor 1</fullName>
        <shortName evidence="1">RF-1</shortName>
    </recommendedName>
</protein>
<accession>B2UZI5</accession>
<comment type="function">
    <text evidence="1">Peptide chain release factor 1 directs the termination of translation in response to the peptide chain termination codons UAG and UAA.</text>
</comment>
<comment type="subcellular location">
    <subcellularLocation>
        <location evidence="1">Cytoplasm</location>
    </subcellularLocation>
</comment>
<comment type="PTM">
    <text evidence="1">Methylated by PrmC. Methylation increases the termination efficiency of RF1.</text>
</comment>
<comment type="similarity">
    <text evidence="1">Belongs to the prokaryotic/mitochondrial release factor family.</text>
</comment>
<reference key="1">
    <citation type="submission" date="2008-05" db="EMBL/GenBank/DDBJ databases">
        <title>Complete genome sequence of Clostridium botulinum E3 str. Alaska E43.</title>
        <authorList>
            <person name="Brinkac L.M."/>
            <person name="Brown J.L."/>
            <person name="Bruce D."/>
            <person name="Detter C."/>
            <person name="Munk C."/>
            <person name="Smith L.A."/>
            <person name="Smith T.J."/>
            <person name="Sutton G."/>
            <person name="Brettin T.S."/>
        </authorList>
    </citation>
    <scope>NUCLEOTIDE SEQUENCE [LARGE SCALE GENOMIC DNA]</scope>
    <source>
        <strain>Alaska E43 / Type E3</strain>
    </source>
</reference>
<keyword id="KW-0963">Cytoplasm</keyword>
<keyword id="KW-0488">Methylation</keyword>
<keyword id="KW-0648">Protein biosynthesis</keyword>
<gene>
    <name evidence="1" type="primary">prfA</name>
    <name type="ordered locus">CLH_0475</name>
</gene>
<proteinExistence type="inferred from homology"/>
<sequence>MLLDKLAFIENKYDELSVKISDPSIMQNQNEWRKLCKEQADLEIIVNAYKEYKQVIEDLQVNKEMLSDESDREMKEMLNEEISSLAEREIELEKEIQILLLPKDPNDDKNVFVEIRGGAGGDEAALFAYNLFRMYTRYAERQRWSTEIMSLNETDIGGFKEVVFMIKGNGAYSKLKYESGVHRVQRVPDTESSGRIHTSTVTVAVLPEVDDVEIEIADKDVRIDVFRASGHGGQCVNTTDSAVRITHLPSGLVVSCQDEKSQLKNKEKAMKVLRSRLFEKAEQERADGIAADRKSQVGTGDRSERIRTYNYPQGRITDHRIGLTLYKLDSFLDGEVQEMINALITADQAEKMQKMGNTEM</sequence>
<name>RF1_CLOBA</name>